<gene>
    <name type="primary">syj1</name>
    <name type="ORF">SPBC2G2.02</name>
</gene>
<dbReference type="EC" id="3.1.3.36"/>
<dbReference type="EMBL" id="CU329671">
    <property type="protein sequence ID" value="CAA17882.1"/>
    <property type="molecule type" value="Genomic_DNA"/>
</dbReference>
<dbReference type="PIR" id="T40141">
    <property type="entry name" value="T40141"/>
</dbReference>
<dbReference type="RefSeq" id="NP_596431.1">
    <property type="nucleotide sequence ID" value="NM_001022350.2"/>
</dbReference>
<dbReference type="PDB" id="1I9Y">
    <property type="method" value="X-ray"/>
    <property type="resolution" value="2.00 A"/>
    <property type="chains" value="A=534-880"/>
</dbReference>
<dbReference type="PDB" id="1I9Z">
    <property type="method" value="X-ray"/>
    <property type="resolution" value="1.80 A"/>
    <property type="chains" value="A=534-880"/>
</dbReference>
<dbReference type="PDBsum" id="1I9Y"/>
<dbReference type="PDBsum" id="1I9Z"/>
<dbReference type="SMR" id="O43001"/>
<dbReference type="BioGRID" id="276801">
    <property type="interactions" value="41"/>
</dbReference>
<dbReference type="FunCoup" id="O43001">
    <property type="interactions" value="256"/>
</dbReference>
<dbReference type="STRING" id="284812.O43001"/>
<dbReference type="iPTMnet" id="O43001"/>
<dbReference type="PaxDb" id="4896-SPBC2G2.02.1"/>
<dbReference type="EnsemblFungi" id="SPBC2G2.02.1">
    <property type="protein sequence ID" value="SPBC2G2.02.1:pep"/>
    <property type="gene ID" value="SPBC2G2.02"/>
</dbReference>
<dbReference type="GeneID" id="2540270"/>
<dbReference type="KEGG" id="spo:2540270"/>
<dbReference type="PomBase" id="SPBC2G2.02">
    <property type="gene designation" value="syj1"/>
</dbReference>
<dbReference type="VEuPathDB" id="FungiDB:SPBC2G2.02"/>
<dbReference type="eggNOG" id="KOG0566">
    <property type="taxonomic scope" value="Eukaryota"/>
</dbReference>
<dbReference type="HOGENOM" id="CLU_003016_2_1_1"/>
<dbReference type="InParanoid" id="O43001"/>
<dbReference type="OMA" id="HPCHELR"/>
<dbReference type="PhylomeDB" id="O43001"/>
<dbReference type="Reactome" id="R-SPO-1660499">
    <property type="pathway name" value="Synthesis of PIPs at the plasma membrane"/>
</dbReference>
<dbReference type="Reactome" id="R-SPO-1855183">
    <property type="pathway name" value="Synthesis of IP2, IP, and Ins in the cytosol"/>
</dbReference>
<dbReference type="Reactome" id="R-SPO-1855204">
    <property type="pathway name" value="Synthesis of IP3 and IP4 in the cytosol"/>
</dbReference>
<dbReference type="Reactome" id="R-SPO-8856828">
    <property type="pathway name" value="Clathrin-mediated endocytosis"/>
</dbReference>
<dbReference type="SABIO-RK" id="O43001"/>
<dbReference type="EvolutionaryTrace" id="O43001"/>
<dbReference type="PRO" id="PR:O43001"/>
<dbReference type="Proteomes" id="UP000002485">
    <property type="component" value="Chromosome II"/>
</dbReference>
<dbReference type="GO" id="GO:0032153">
    <property type="term" value="C:cell division site"/>
    <property type="evidence" value="ECO:0007005"/>
    <property type="project" value="PomBase"/>
</dbReference>
<dbReference type="GO" id="GO:0051286">
    <property type="term" value="C:cell tip"/>
    <property type="evidence" value="ECO:0007005"/>
    <property type="project" value="PomBase"/>
</dbReference>
<dbReference type="GO" id="GO:0005737">
    <property type="term" value="C:cytoplasm"/>
    <property type="evidence" value="ECO:0000318"/>
    <property type="project" value="GO_Central"/>
</dbReference>
<dbReference type="GO" id="GO:0005829">
    <property type="term" value="C:cytosol"/>
    <property type="evidence" value="ECO:0007005"/>
    <property type="project" value="PomBase"/>
</dbReference>
<dbReference type="GO" id="GO:0016020">
    <property type="term" value="C:membrane"/>
    <property type="evidence" value="ECO:0000318"/>
    <property type="project" value="GO_Central"/>
</dbReference>
<dbReference type="GO" id="GO:0005509">
    <property type="term" value="F:calcium ion binding"/>
    <property type="evidence" value="ECO:0000314"/>
    <property type="project" value="PomBase"/>
</dbReference>
<dbReference type="GO" id="GO:1990651">
    <property type="term" value="F:inositol-1,2,4,5,6-pentakisphosphate 5-phosphatase activity"/>
    <property type="evidence" value="ECO:0000314"/>
    <property type="project" value="PomBase"/>
</dbReference>
<dbReference type="GO" id="GO:1990649">
    <property type="term" value="F:inositol-1,2,4,5-tetrakisphosphate 5-phosphatase activity"/>
    <property type="evidence" value="ECO:0000314"/>
    <property type="project" value="PomBase"/>
</dbReference>
<dbReference type="GO" id="GO:0052659">
    <property type="term" value="F:inositol-1,3,4,5-tetrakisphosphate 5-phosphatase activity"/>
    <property type="evidence" value="ECO:0000314"/>
    <property type="project" value="PomBase"/>
</dbReference>
<dbReference type="GO" id="GO:0052658">
    <property type="term" value="F:inositol-1,4,5-trisphosphate 5-phosphatase activity"/>
    <property type="evidence" value="ECO:0000314"/>
    <property type="project" value="PomBase"/>
</dbReference>
<dbReference type="GO" id="GO:1990650">
    <property type="term" value="F:inositol-2,4,5,6-tetrakisphosphate 5-phosphatase activity"/>
    <property type="evidence" value="ECO:0000314"/>
    <property type="project" value="PomBase"/>
</dbReference>
<dbReference type="GO" id="GO:1990640">
    <property type="term" value="F:inositol-2,4,5-triphosphate 5-phosphatase activity"/>
    <property type="evidence" value="ECO:0000314"/>
    <property type="project" value="PomBase"/>
</dbReference>
<dbReference type="GO" id="GO:1990648">
    <property type="term" value="F:inositol-4,5,6-triphosphate 5-phosphatase activity"/>
    <property type="evidence" value="ECO:0000314"/>
    <property type="project" value="PomBase"/>
</dbReference>
<dbReference type="GO" id="GO:0030487">
    <property type="term" value="F:inositol-4,5-bisphosphate 5-phosphatase activity"/>
    <property type="evidence" value="ECO:0000314"/>
    <property type="project" value="PomBase"/>
</dbReference>
<dbReference type="GO" id="GO:0034485">
    <property type="term" value="F:phosphatidylinositol-3,4,5-trisphosphate 5-phosphatase activity"/>
    <property type="evidence" value="ECO:0000314"/>
    <property type="project" value="PomBase"/>
</dbReference>
<dbReference type="GO" id="GO:0043813">
    <property type="term" value="F:phosphatidylinositol-3,5-bisphosphate 5-phosphatase activity"/>
    <property type="evidence" value="ECO:0000314"/>
    <property type="project" value="PomBase"/>
</dbReference>
<dbReference type="GO" id="GO:0004439">
    <property type="term" value="F:phosphatidylinositol-4,5-bisphosphate 5-phosphatase activity"/>
    <property type="evidence" value="ECO:0000314"/>
    <property type="project" value="PomBase"/>
</dbReference>
<dbReference type="GO" id="GO:0046856">
    <property type="term" value="P:phosphatidylinositol dephosphorylation"/>
    <property type="evidence" value="ECO:0007669"/>
    <property type="project" value="InterPro"/>
</dbReference>
<dbReference type="GO" id="GO:0046488">
    <property type="term" value="P:phosphatidylinositol metabolic process"/>
    <property type="evidence" value="ECO:0000314"/>
    <property type="project" value="PomBase"/>
</dbReference>
<dbReference type="GO" id="GO:0015031">
    <property type="term" value="P:protein transport"/>
    <property type="evidence" value="ECO:0007669"/>
    <property type="project" value="UniProtKB-KW"/>
</dbReference>
<dbReference type="CDD" id="cd09090">
    <property type="entry name" value="INPP5c_ScInp51p-like"/>
    <property type="match status" value="1"/>
</dbReference>
<dbReference type="FunFam" id="3.60.10.10:FF:000029">
    <property type="entry name" value="Inositol polyphosphate 5-phosphatase"/>
    <property type="match status" value="1"/>
</dbReference>
<dbReference type="Gene3D" id="3.60.10.10">
    <property type="entry name" value="Endonuclease/exonuclease/phosphatase"/>
    <property type="match status" value="1"/>
</dbReference>
<dbReference type="InterPro" id="IPR036691">
    <property type="entry name" value="Endo/exonu/phosph_ase_sf"/>
</dbReference>
<dbReference type="InterPro" id="IPR046985">
    <property type="entry name" value="IP5"/>
</dbReference>
<dbReference type="InterPro" id="IPR000300">
    <property type="entry name" value="IPPc"/>
</dbReference>
<dbReference type="InterPro" id="IPR002013">
    <property type="entry name" value="SAC_dom"/>
</dbReference>
<dbReference type="PANTHER" id="PTHR11200">
    <property type="entry name" value="INOSITOL 5-PHOSPHATASE"/>
    <property type="match status" value="1"/>
</dbReference>
<dbReference type="PANTHER" id="PTHR11200:SF257">
    <property type="entry name" value="PHOSPHOINOSITIDE 5-PHOSPHATASE"/>
    <property type="match status" value="1"/>
</dbReference>
<dbReference type="Pfam" id="PF22669">
    <property type="entry name" value="Exo_endo_phos2"/>
    <property type="match status" value="1"/>
</dbReference>
<dbReference type="Pfam" id="PF02383">
    <property type="entry name" value="Syja_N"/>
    <property type="match status" value="1"/>
</dbReference>
<dbReference type="SMART" id="SM00128">
    <property type="entry name" value="IPPc"/>
    <property type="match status" value="1"/>
</dbReference>
<dbReference type="SUPFAM" id="SSF56219">
    <property type="entry name" value="DNase I-like"/>
    <property type="match status" value="1"/>
</dbReference>
<dbReference type="PROSITE" id="PS50275">
    <property type="entry name" value="SAC"/>
    <property type="match status" value="1"/>
</dbReference>
<name>SYJ1_SCHPO</name>
<evidence type="ECO:0000255" key="1">
    <source>
        <dbReference type="PROSITE-ProRule" id="PRU00183"/>
    </source>
</evidence>
<evidence type="ECO:0000256" key="2">
    <source>
        <dbReference type="SAM" id="MobiDB-lite"/>
    </source>
</evidence>
<evidence type="ECO:0000269" key="3">
    <source>
    </source>
</evidence>
<evidence type="ECO:0000269" key="4">
    <source>
    </source>
</evidence>
<evidence type="ECO:0000269" key="5">
    <source>
    </source>
</evidence>
<evidence type="ECO:0000305" key="6"/>
<evidence type="ECO:0007829" key="7">
    <source>
        <dbReference type="PDB" id="1I9Z"/>
    </source>
</evidence>
<feature type="chain" id="PRO_0000209736" description="Inositol-1,4,5-trisphosphate 5-phosphatase 1">
    <location>
        <begin position="1"/>
        <end position="1076"/>
    </location>
</feature>
<feature type="domain" description="SAC" evidence="1">
    <location>
        <begin position="144"/>
        <end position="474"/>
    </location>
</feature>
<feature type="region of interest" description="Catalytic">
    <location>
        <begin position="534"/>
        <end position="880"/>
    </location>
</feature>
<feature type="region of interest" description="Disordered" evidence="2">
    <location>
        <begin position="930"/>
        <end position="958"/>
    </location>
</feature>
<feature type="region of interest" description="Disordered" evidence="2">
    <location>
        <begin position="977"/>
        <end position="1076"/>
    </location>
</feature>
<feature type="compositionally biased region" description="Low complexity" evidence="2">
    <location>
        <begin position="977"/>
        <end position="1004"/>
    </location>
</feature>
<feature type="compositionally biased region" description="Low complexity" evidence="2">
    <location>
        <begin position="1025"/>
        <end position="1040"/>
    </location>
</feature>
<feature type="compositionally biased region" description="Polar residues" evidence="2">
    <location>
        <begin position="1065"/>
        <end position="1076"/>
    </location>
</feature>
<feature type="mutagenesis site" description="Reduces the catalytic activity by 3 to 4 orders of magnitude." evidence="4">
    <original>E</original>
    <variation>A</variation>
    <variation>Q</variation>
    <location>
        <position position="597"/>
    </location>
</feature>
<feature type="helix" evidence="7">
    <location>
        <begin position="536"/>
        <end position="547"/>
    </location>
</feature>
<feature type="helix" evidence="7">
    <location>
        <begin position="548"/>
        <end position="551"/>
    </location>
</feature>
<feature type="strand" evidence="7">
    <location>
        <begin position="553"/>
        <end position="566"/>
    </location>
</feature>
<feature type="helix" evidence="7">
    <location>
        <begin position="577"/>
        <end position="580"/>
    </location>
</feature>
<feature type="strand" evidence="7">
    <location>
        <begin position="583"/>
        <end position="585"/>
    </location>
</feature>
<feature type="strand" evidence="7">
    <location>
        <begin position="589"/>
        <end position="596"/>
    </location>
</feature>
<feature type="helix" evidence="7">
    <location>
        <begin position="611"/>
        <end position="627"/>
    </location>
</feature>
<feature type="strand" evidence="7">
    <location>
        <begin position="635"/>
        <end position="643"/>
    </location>
</feature>
<feature type="strand" evidence="7">
    <location>
        <begin position="646"/>
        <end position="653"/>
    </location>
</feature>
<feature type="helix" evidence="7">
    <location>
        <begin position="654"/>
        <end position="659"/>
    </location>
</feature>
<feature type="strand" evidence="7">
    <location>
        <begin position="660"/>
        <end position="669"/>
    </location>
</feature>
<feature type="strand" evidence="7">
    <location>
        <begin position="680"/>
        <end position="688"/>
    </location>
</feature>
<feature type="strand" evidence="7">
    <location>
        <begin position="691"/>
        <end position="699"/>
    </location>
</feature>
<feature type="helix" evidence="7">
    <location>
        <begin position="707"/>
        <end position="720"/>
    </location>
</feature>
<feature type="helix" evidence="7">
    <location>
        <begin position="724"/>
        <end position="726"/>
    </location>
</feature>
<feature type="strand" evidence="7">
    <location>
        <begin position="731"/>
        <end position="740"/>
    </location>
</feature>
<feature type="strand" evidence="7">
    <location>
        <begin position="745"/>
        <end position="747"/>
    </location>
</feature>
<feature type="helix" evidence="7">
    <location>
        <begin position="749"/>
        <end position="757"/>
    </location>
</feature>
<feature type="helix" evidence="7">
    <location>
        <begin position="761"/>
        <end position="765"/>
    </location>
</feature>
<feature type="helix" evidence="7">
    <location>
        <begin position="769"/>
        <end position="775"/>
    </location>
</feature>
<feature type="strand" evidence="7">
    <location>
        <begin position="778"/>
        <end position="780"/>
    </location>
</feature>
<feature type="strand" evidence="7">
    <location>
        <begin position="816"/>
        <end position="823"/>
    </location>
</feature>
<feature type="strand" evidence="7">
    <location>
        <begin position="825"/>
        <end position="831"/>
    </location>
</feature>
<feature type="strand" evidence="7">
    <location>
        <begin position="836"/>
        <end position="839"/>
    </location>
</feature>
<feature type="strand" evidence="7">
    <location>
        <begin position="842"/>
        <end position="853"/>
    </location>
</feature>
<feature type="helix" evidence="7">
    <location>
        <begin position="855"/>
        <end position="876"/>
    </location>
</feature>
<protein>
    <recommendedName>
        <fullName>Inositol-1,4,5-trisphosphate 5-phosphatase 1</fullName>
        <ecNumber>3.1.3.36</ecNumber>
    </recommendedName>
    <alternativeName>
        <fullName>Synaptojanin-like protein 1</fullName>
    </alternativeName>
</protein>
<reference key="1">
    <citation type="journal article" date="2002" name="Nature">
        <title>The genome sequence of Schizosaccharomyces pombe.</title>
        <authorList>
            <person name="Wood V."/>
            <person name="Gwilliam R."/>
            <person name="Rajandream M.A."/>
            <person name="Lyne M.H."/>
            <person name="Lyne R."/>
            <person name="Stewart A."/>
            <person name="Sgouros J.G."/>
            <person name="Peat N."/>
            <person name="Hayles J."/>
            <person name="Baker S.G."/>
            <person name="Basham D."/>
            <person name="Bowman S."/>
            <person name="Brooks K."/>
            <person name="Brown D."/>
            <person name="Brown S."/>
            <person name="Chillingworth T."/>
            <person name="Churcher C.M."/>
            <person name="Collins M."/>
            <person name="Connor R."/>
            <person name="Cronin A."/>
            <person name="Davis P."/>
            <person name="Feltwell T."/>
            <person name="Fraser A."/>
            <person name="Gentles S."/>
            <person name="Goble A."/>
            <person name="Hamlin N."/>
            <person name="Harris D.E."/>
            <person name="Hidalgo J."/>
            <person name="Hodgson G."/>
            <person name="Holroyd S."/>
            <person name="Hornsby T."/>
            <person name="Howarth S."/>
            <person name="Huckle E.J."/>
            <person name="Hunt S."/>
            <person name="Jagels K."/>
            <person name="James K.D."/>
            <person name="Jones L."/>
            <person name="Jones M."/>
            <person name="Leather S."/>
            <person name="McDonald S."/>
            <person name="McLean J."/>
            <person name="Mooney P."/>
            <person name="Moule S."/>
            <person name="Mungall K.L."/>
            <person name="Murphy L.D."/>
            <person name="Niblett D."/>
            <person name="Odell C."/>
            <person name="Oliver K."/>
            <person name="O'Neil S."/>
            <person name="Pearson D."/>
            <person name="Quail M.A."/>
            <person name="Rabbinowitsch E."/>
            <person name="Rutherford K.M."/>
            <person name="Rutter S."/>
            <person name="Saunders D."/>
            <person name="Seeger K."/>
            <person name="Sharp S."/>
            <person name="Skelton J."/>
            <person name="Simmonds M.N."/>
            <person name="Squares R."/>
            <person name="Squares S."/>
            <person name="Stevens K."/>
            <person name="Taylor K."/>
            <person name="Taylor R.G."/>
            <person name="Tivey A."/>
            <person name="Walsh S.V."/>
            <person name="Warren T."/>
            <person name="Whitehead S."/>
            <person name="Woodward J.R."/>
            <person name="Volckaert G."/>
            <person name="Aert R."/>
            <person name="Robben J."/>
            <person name="Grymonprez B."/>
            <person name="Weltjens I."/>
            <person name="Vanstreels E."/>
            <person name="Rieger M."/>
            <person name="Schaefer M."/>
            <person name="Mueller-Auer S."/>
            <person name="Gabel C."/>
            <person name="Fuchs M."/>
            <person name="Duesterhoeft A."/>
            <person name="Fritzc C."/>
            <person name="Holzer E."/>
            <person name="Moestl D."/>
            <person name="Hilbert H."/>
            <person name="Borzym K."/>
            <person name="Langer I."/>
            <person name="Beck A."/>
            <person name="Lehrach H."/>
            <person name="Reinhardt R."/>
            <person name="Pohl T.M."/>
            <person name="Eger P."/>
            <person name="Zimmermann W."/>
            <person name="Wedler H."/>
            <person name="Wambutt R."/>
            <person name="Purnelle B."/>
            <person name="Goffeau A."/>
            <person name="Cadieu E."/>
            <person name="Dreano S."/>
            <person name="Gloux S."/>
            <person name="Lelaure V."/>
            <person name="Mottier S."/>
            <person name="Galibert F."/>
            <person name="Aves S.J."/>
            <person name="Xiang Z."/>
            <person name="Hunt C."/>
            <person name="Moore K."/>
            <person name="Hurst S.M."/>
            <person name="Lucas M."/>
            <person name="Rochet M."/>
            <person name="Gaillardin C."/>
            <person name="Tallada V.A."/>
            <person name="Garzon A."/>
            <person name="Thode G."/>
            <person name="Daga R.R."/>
            <person name="Cruzado L."/>
            <person name="Jimenez J."/>
            <person name="Sanchez M."/>
            <person name="del Rey F."/>
            <person name="Benito J."/>
            <person name="Dominguez A."/>
            <person name="Revuelta J.L."/>
            <person name="Moreno S."/>
            <person name="Armstrong J."/>
            <person name="Forsburg S.L."/>
            <person name="Cerutti L."/>
            <person name="Lowe T."/>
            <person name="McCombie W.R."/>
            <person name="Paulsen I."/>
            <person name="Potashkin J."/>
            <person name="Shpakovski G.V."/>
            <person name="Ussery D."/>
            <person name="Barrell B.G."/>
            <person name="Nurse P."/>
        </authorList>
    </citation>
    <scope>NUCLEOTIDE SEQUENCE [LARGE SCALE GENOMIC DNA]</scope>
    <source>
        <strain>972 / ATCC 24843</strain>
    </source>
</reference>
<reference key="2">
    <citation type="journal article" date="2004" name="J. Biol. Chem.">
        <title>Comparative mechanistic and substrate specificity study of inositol polyphosphate 5-phosphatase Schizosaccharomyces pombe Synaptojanin and SHIP2.</title>
        <authorList>
            <person name="Chi Y."/>
            <person name="Zhou B."/>
            <person name="Wang W.-Q."/>
            <person name="Chung S.-K."/>
            <person name="Kwon Y.-U."/>
            <person name="Ahn Y.-H."/>
            <person name="Chang Y.-T."/>
            <person name="Tsujishita Y."/>
            <person name="Hurley J.H."/>
            <person name="Zhang Z.-Y."/>
        </authorList>
    </citation>
    <scope>FUNCTION</scope>
    <scope>BIOPHYSICOCHEMICAL PROPERTIES</scope>
    <scope>COFACTOR</scope>
    <scope>MUTAGENESIS OF GLU-597</scope>
</reference>
<reference key="3">
    <citation type="journal article" date="2006" name="Nat. Biotechnol.">
        <title>ORFeome cloning and global analysis of protein localization in the fission yeast Schizosaccharomyces pombe.</title>
        <authorList>
            <person name="Matsuyama A."/>
            <person name="Arai R."/>
            <person name="Yashiroda Y."/>
            <person name="Shirai A."/>
            <person name="Kamata A."/>
            <person name="Sekido S."/>
            <person name="Kobayashi Y."/>
            <person name="Hashimoto A."/>
            <person name="Hamamoto M."/>
            <person name="Hiraoka Y."/>
            <person name="Horinouchi S."/>
            <person name="Yoshida M."/>
        </authorList>
    </citation>
    <scope>SUBCELLULAR LOCATION [LARGE SCALE ANALYSIS]</scope>
</reference>
<reference key="4">
    <citation type="journal article" date="2001" name="Cell">
        <title>Specificity determinants in phosphoinositide dephosphorylation: crystal structure of an archetypal inositol polyphosphate 5-phosphatase.</title>
        <authorList>
            <person name="Tsujishita Y."/>
            <person name="Guo S."/>
            <person name="Stolz L.E."/>
            <person name="York J.D."/>
            <person name="Hurley J.H."/>
        </authorList>
    </citation>
    <scope>X-RAY CRYSTALLOGRAPHY (1.8 ANGSTROMS) OF 534-880</scope>
    <scope>CATALYTIC ACTIVITY</scope>
</reference>
<keyword id="KW-0002">3D-structure</keyword>
<keyword id="KW-0963">Cytoplasm</keyword>
<keyword id="KW-0378">Hydrolase</keyword>
<keyword id="KW-0443">Lipid metabolism</keyword>
<keyword id="KW-0460">Magnesium</keyword>
<keyword id="KW-0653">Protein transport</keyword>
<keyword id="KW-1185">Reference proteome</keyword>
<keyword id="KW-0813">Transport</keyword>
<sequence length="1076" mass="121822">MQCLLREKPRSLALVNKDHALMFHSVPQNKNSLSVCVAEFTALSEKPLEGFRKISSHRIYGTLGLIELEGSNFLCVISGASEVARVRDKERVFRIMEVCFYSVNRSNWDHIRQENYSPDIPDGYDTDTQGYDSYKYAAEPFSSLRKLLTNGSFYFSLDFDITTRLQLRTSQTMTEPQYDSMHTQFMWNEFMLRQLIKFRSHLNGDEKSALDGCRFFTCAIRGFASTEQFKLGIQTIRLSLISRLSSLRAGTRFLSRGVDDDGNVANFVETETILDSSKYCVSYCQVRGSIPIFWEQEGVQMFGQKIDITRSLEATRAAFEKHFTSLIEEYGPVHIINLLGTGSGERSLSERLRQHIQLSPEKDLIHLTEFDYHSQIRSFEDANKIRPMIYSDAETFGFYFENNEGQSIVVQDGVFRTNCLDCLDRTNVIQNLVSRVFLEQVMIYTRQNAGYDFWQVHSTIWANNGDALARIYTGTGALKSSFTRKGKLSIAGALNDLSKSVGRMYINNFQDKGRQETIDLLLGRLIDQHPVILYDPIHEYVNHELRKRENEFSEHKNVKIFVASYNLNGCSATTKLENWLFPENTPLADIYVVGFQEIVQLTPQQVISADPAKRREWESCVKRLLNGKCTSGPGYVQLRSGQLVGTALMIFCKESCLPSIKNVEGTVKKTGLGGVSGNKGAVAIRFDYEDTGLCFITSHLAAGYTNYDERDHDYRTIASGLRFRRGRSIFNHDYVVWFGDFNYRISLTYEEVVPCIAQGKLSYLFEYDQLNKQMLTGKVFPFFSELPITFPPTYKFDIGTDIYDTSDKHRVPAWTDRILYRGELVPHSYQSVPLYYSDHRPIYATYEANIVKVDREKKKILFEELYNQRKQEVRDASQTSYTLIDIAGSVAGKPNLIPHLPANGVDKIKQPSSERSKWWFDDGLPAKSIAAPPGPEYRLNPSRPINPFEPTAEPDWISNTKQSFDKKSSLIDSIPALSPAPSSLARSSVSSQRSSTSIIPIKPNKPTKPDHLVAPRVKPLLPPRSGSSSSGVPAPNLTPVNVPPTPPPRKSSASQRSGDLLASSPEESSISWKPLV</sequence>
<organism>
    <name type="scientific">Schizosaccharomyces pombe (strain 972 / ATCC 24843)</name>
    <name type="common">Fission yeast</name>
    <dbReference type="NCBI Taxonomy" id="284812"/>
    <lineage>
        <taxon>Eukaryota</taxon>
        <taxon>Fungi</taxon>
        <taxon>Dikarya</taxon>
        <taxon>Ascomycota</taxon>
        <taxon>Taphrinomycotina</taxon>
        <taxon>Schizosaccharomycetes</taxon>
        <taxon>Schizosaccharomycetales</taxon>
        <taxon>Schizosaccharomycetaceae</taxon>
        <taxon>Schizosaccharomyces</taxon>
    </lineage>
</organism>
<proteinExistence type="evidence at protein level"/>
<comment type="function">
    <text evidence="4">Controls the cellular levels and subcellular distribution of phosphatidylinositol 3-phosphate and phosphatidylinositol 4,5-bisphosphate. Involved in distinct membrane trafficking and signal transduction pathways. Highly active against a range of soluble and lipid inositol phosphates. Active in dephosphorylating the 5-position of Ins(1,4,5)P3 and Ins(1,3,4,5)P4 and to a lesser extent Ins(1,4,5,6)P4. The enzyme is also active against PI(4,5)P2 presented in sonicated vesicles and Triton mixed micelles, and somewhat less active against PI(3,5)P2 in unilamellar vesicles. Activity against PI(3,5)P2 drops sharply when this substrate is presented in mixed micelles. Also hydrolyzes PIP3 to produce PI(3,4)P2.</text>
</comment>
<comment type="catalytic activity">
    <reaction evidence="3">
        <text>a 1,2-diacyl-sn-glycero-3-phospho-(1D-myo-inositol-4,5-bisphosphate) + H2O = a 1,2-diacyl-sn-glycero-3-phospho-(1D-myo-inositol 4-phosphate) + phosphate</text>
        <dbReference type="Rhea" id="RHEA:22764"/>
        <dbReference type="ChEBI" id="CHEBI:15377"/>
        <dbReference type="ChEBI" id="CHEBI:43474"/>
        <dbReference type="ChEBI" id="CHEBI:58178"/>
        <dbReference type="ChEBI" id="CHEBI:58456"/>
        <dbReference type="EC" id="3.1.3.36"/>
    </reaction>
</comment>
<comment type="cofactor">
    <cofactor evidence="4">
        <name>Mg(2+)</name>
        <dbReference type="ChEBI" id="CHEBI:18420"/>
    </cofactor>
</comment>
<comment type="biophysicochemical properties">
    <kinetics>
        <KM evidence="4">57.8 uM for Ins(1,4,5)P3 (at pH 7.4 and 30 degrees Celsius)</KM>
        <KM evidence="4">10.9 uM for Ins(2,4,5)P3 (at pH 7.4 and 30 degrees Celsius)</KM>
        <KM evidence="4">75.9 uM for Ins(2,4)P2 (at pH 7.4 and 30 degrees Celsius)</KM>
        <KM evidence="4">5860 uM for p-nitrophenyl phosphate (at pH 7 and 30 degrees Celsius)</KM>
        <KM evidence="4">182 uM for 3-O-methylfluorescein phosphate (at pH 7 and 30 degrees Celsius)</KM>
        <KM evidence="4">530 uM for magnesium ions</KM>
        <KM evidence="4">12 uM for manganese ions</KM>
        <KM evidence="4">6.39 uM for nickel ions</KM>
        <KM evidence="4">14.5 uM for cobalt ions</KM>
    </kinetics>
    <phDependence>
        <text evidence="4">Optimum pH is about 7.4.</text>
    </phDependence>
</comment>
<comment type="subcellular location">
    <subcellularLocation>
        <location evidence="5">Cytoplasm</location>
    </subcellularLocation>
    <text>Localizes at the cell tip and the barrier septum.</text>
</comment>
<comment type="similarity">
    <text evidence="6">Belongs to the synaptojanin family.</text>
</comment>
<comment type="similarity">
    <text evidence="6">In the central section; belongs to the inositol 1,4,5-trisphosphate 5-phosphatase family.</text>
</comment>
<accession>O43001</accession>